<protein>
    <recommendedName>
        <fullName>Envelope glycoprotein E</fullName>
        <shortName>gE</shortName>
    </recommendedName>
</protein>
<reference key="1">
    <citation type="journal article" date="2006" name="J. Virol.">
        <title>Psittacid herpesvirus 1 and infectious laryngotracheitis virus: Comparative genome sequence analysis of two avian alphaherpesviruses.</title>
        <authorList>
            <person name="Thureen D.R."/>
            <person name="Keeler C.L. Jr."/>
        </authorList>
    </citation>
    <scope>NUCLEOTIDE SEQUENCE [LARGE SCALE GENOMIC DNA]</scope>
</reference>
<organism>
    <name type="scientific">Psittacid herpesvirus 1 (isolate Amazon parrot/-/97-0001/1997)</name>
    <name type="common">PsHV-1</name>
    <name type="synonym">Pacheco's disease virus</name>
    <dbReference type="NCBI Taxonomy" id="670426"/>
    <lineage>
        <taxon>Viruses</taxon>
        <taxon>Duplodnaviria</taxon>
        <taxon>Heunggongvirae</taxon>
        <taxon>Peploviricota</taxon>
        <taxon>Herviviricetes</taxon>
        <taxon>Herpesvirales</taxon>
        <taxon>Orthoherpesviridae</taxon>
        <taxon>Alphaherpesvirinae</taxon>
        <taxon>Iltovirus</taxon>
        <taxon>Iltovirus psittacidalpha1</taxon>
        <taxon>Psittacid alphaherpesvirus 1</taxon>
    </lineage>
</organism>
<feature type="signal peptide" evidence="2">
    <location>
        <begin position="1"/>
        <end position="20"/>
    </location>
</feature>
<feature type="chain" id="PRO_0000406829" description="Envelope glycoprotein E">
    <location>
        <begin position="21"/>
        <end position="568"/>
    </location>
</feature>
<feature type="topological domain" description="Virion surface" evidence="2">
    <location>
        <begin position="21"/>
        <end position="422"/>
    </location>
</feature>
<feature type="transmembrane region" description="Helical" evidence="2">
    <location>
        <begin position="423"/>
        <end position="443"/>
    </location>
</feature>
<feature type="topological domain" description="Intravirion" evidence="2">
    <location>
        <begin position="444"/>
        <end position="568"/>
    </location>
</feature>
<feature type="region of interest" description="Disordered" evidence="3">
    <location>
        <begin position="470"/>
        <end position="534"/>
    </location>
</feature>
<feature type="region of interest" description="Acidic" evidence="1">
    <location>
        <begin position="482"/>
        <end position="497"/>
    </location>
</feature>
<feature type="short sequence motif" description="Internalization motif" evidence="1">
    <location>
        <begin position="465"/>
        <end position="468"/>
    </location>
</feature>
<feature type="compositionally biased region" description="Acidic residues" evidence="3">
    <location>
        <begin position="486"/>
        <end position="500"/>
    </location>
</feature>
<feature type="compositionally biased region" description="Basic residues" evidence="3">
    <location>
        <begin position="515"/>
        <end position="526"/>
    </location>
</feature>
<feature type="glycosylation site" description="N-linked (GlcNAc...) asparagine; by host" evidence="2">
    <location>
        <position position="88"/>
    </location>
</feature>
<feature type="glycosylation site" description="N-linked (GlcNAc...) asparagine; by host" evidence="2">
    <location>
        <position position="179"/>
    </location>
</feature>
<feature type="glycosylation site" description="N-linked (GlcNAc...) asparagine; by host" evidence="2">
    <location>
        <position position="248"/>
    </location>
</feature>
<feature type="disulfide bond" evidence="1">
    <location>
        <begin position="271"/>
        <end position="280"/>
    </location>
</feature>
<evidence type="ECO:0000250" key="1"/>
<evidence type="ECO:0000255" key="2"/>
<evidence type="ECO:0000256" key="3">
    <source>
        <dbReference type="SAM" id="MobiDB-lite"/>
    </source>
</evidence>
<evidence type="ECO:0000305" key="4"/>
<accession>Q6UDF4</accession>
<gene>
    <name type="primary">US8</name>
</gene>
<organismHost>
    <name type="scientific">Amazona oratrix</name>
    <name type="common">yellow-headed parrot</name>
    <dbReference type="NCBI Taxonomy" id="152276"/>
</organismHost>
<keyword id="KW-1015">Disulfide bond</keyword>
<keyword id="KW-0325">Glycoprotein</keyword>
<keyword id="KW-1031">Host cell junction</keyword>
<keyword id="KW-1032">Host cell membrane</keyword>
<keyword id="KW-1039">Host endosome</keyword>
<keyword id="KW-1040">Host Golgi apparatus</keyword>
<keyword id="KW-1043">Host membrane</keyword>
<keyword id="KW-0472">Membrane</keyword>
<keyword id="KW-1185">Reference proteome</keyword>
<keyword id="KW-0732">Signal</keyword>
<keyword id="KW-0812">Transmembrane</keyword>
<keyword id="KW-1133">Transmembrane helix</keyword>
<keyword id="KW-0261">Viral envelope protein</keyword>
<keyword id="KW-1162">Viral penetration into host cytoplasm</keyword>
<keyword id="KW-0946">Virion</keyword>
<keyword id="KW-1164">Virus endocytosis by host</keyword>
<keyword id="KW-1160">Virus entry into host cell</keyword>
<name>GE_PSHV1</name>
<dbReference type="EMBL" id="AY372243">
    <property type="protein sequence ID" value="AAQ73756.1"/>
    <property type="molecule type" value="Genomic_DNA"/>
</dbReference>
<dbReference type="RefSeq" id="NP_944450.1">
    <property type="nucleotide sequence ID" value="NC_005264.1"/>
</dbReference>
<dbReference type="SMR" id="Q6UDF4"/>
<dbReference type="GlyCosmos" id="Q6UDF4">
    <property type="glycosylation" value="3 sites, No reported glycans"/>
</dbReference>
<dbReference type="GeneID" id="2656958"/>
<dbReference type="KEGG" id="vg:2656958"/>
<dbReference type="Proteomes" id="UP000006840">
    <property type="component" value="Segment"/>
</dbReference>
<dbReference type="GO" id="GO:0044175">
    <property type="term" value="C:host cell endosome membrane"/>
    <property type="evidence" value="ECO:0007669"/>
    <property type="project" value="UniProtKB-SubCell"/>
</dbReference>
<dbReference type="GO" id="GO:0044178">
    <property type="term" value="C:host cell Golgi membrane"/>
    <property type="evidence" value="ECO:0007669"/>
    <property type="project" value="UniProtKB-SubCell"/>
</dbReference>
<dbReference type="GO" id="GO:0044156">
    <property type="term" value="C:host cell junction"/>
    <property type="evidence" value="ECO:0007669"/>
    <property type="project" value="UniProtKB-SubCell"/>
</dbReference>
<dbReference type="GO" id="GO:0016020">
    <property type="term" value="C:membrane"/>
    <property type="evidence" value="ECO:0007669"/>
    <property type="project" value="UniProtKB-KW"/>
</dbReference>
<dbReference type="GO" id="GO:0019031">
    <property type="term" value="C:viral envelope"/>
    <property type="evidence" value="ECO:0007669"/>
    <property type="project" value="UniProtKB-KW"/>
</dbReference>
<dbReference type="GO" id="GO:0055036">
    <property type="term" value="C:virion membrane"/>
    <property type="evidence" value="ECO:0007669"/>
    <property type="project" value="UniProtKB-SubCell"/>
</dbReference>
<dbReference type="GO" id="GO:0075509">
    <property type="term" value="P:endocytosis involved in viral entry into host cell"/>
    <property type="evidence" value="ECO:0007669"/>
    <property type="project" value="UniProtKB-KW"/>
</dbReference>
<dbReference type="Gene3D" id="2.60.40.10">
    <property type="entry name" value="Immunoglobulins"/>
    <property type="match status" value="1"/>
</dbReference>
<dbReference type="InterPro" id="IPR046463">
    <property type="entry name" value="Herpes_gE_N"/>
</dbReference>
<dbReference type="InterPro" id="IPR003404">
    <property type="entry name" value="Herpes_glycopE_Fc"/>
</dbReference>
<dbReference type="InterPro" id="IPR036179">
    <property type="entry name" value="Ig-like_dom_sf"/>
</dbReference>
<dbReference type="InterPro" id="IPR013783">
    <property type="entry name" value="Ig-like_fold"/>
</dbReference>
<dbReference type="Pfam" id="PF02480">
    <property type="entry name" value="Herpes_gE"/>
    <property type="match status" value="1"/>
</dbReference>
<dbReference type="Pfam" id="PF20418">
    <property type="entry name" value="Herpes_gE_N"/>
    <property type="match status" value="1"/>
</dbReference>
<dbReference type="SUPFAM" id="SSF48726">
    <property type="entry name" value="Immunoglobulin"/>
    <property type="match status" value="1"/>
</dbReference>
<comment type="function">
    <text evidence="1">In epithelial cells, the heterodimer gE/gI is required for the cell-to-cell spread of the virus, by sorting nascent virions to cell junctions. Once the virus reaches the cell junctions, virus particles can spread to adjacent cells extremely rapidly through interactions with cellular receptors that accumulate at these junctions. Implicated in basolateral spread in polarized cells. In neuronal cells, gE/gI is essential for the anterograde spread of the infection throughout the host nervous system. Together with US9, the heterodimer gE/gI is involved in the sorting and transport of viral structural components toward axon tips (By similarity).</text>
</comment>
<comment type="subunit">
    <text evidence="1">Interacts with gI.</text>
</comment>
<comment type="subcellular location">
    <subcellularLocation>
        <location evidence="1">Virion membrane</location>
        <topology evidence="1">Single-pass type I membrane protein</topology>
    </subcellularLocation>
    <subcellularLocation>
        <location evidence="1">Host cell membrane</location>
        <topology evidence="1">Single-pass type I membrane protein</topology>
    </subcellularLocation>
    <subcellularLocation>
        <location evidence="1">Host cell junction</location>
    </subcellularLocation>
    <subcellularLocation>
        <location evidence="1">Host Golgi apparatus membrane</location>
        <topology evidence="1">Single-pass membrane protein</topology>
    </subcellularLocation>
    <subcellularLocation>
        <location evidence="1">Host endosome membrane</location>
        <topology evidence="1">Single-pass membrane protein</topology>
    </subcellularLocation>
    <text evidence="1">During virion morphogenesis, this protein probably accumulates in the endosomes and trans-Golgi where secondary envelopment occurs. It is probably transported to the cell surface from where it is endocytosed and directed to the trans-Golgi network (TGN), maybe through an interaction with PACS-1 sorting protein. The heterodimer gE/gI then redistributes to cell junctions to promote cell-cell spread later in the infection (By similarity).</text>
</comment>
<comment type="PTM">
    <text evidence="4">Phosphorylated on serines within the acidic cluster. Phosphorylation determines whether endocytosed viral gE traffics to the trans-Golgi network or recycles to the cell membrane.</text>
</comment>
<comment type="similarity">
    <text evidence="4">Belongs to the alphaherpesvirinae glycoprotein E family.</text>
</comment>
<sequence>MMPATLAGLALAVTVATMFAQRVDSTTIHHVSGLKGKPLLFGPSLRRTLPAGGTFKWVLVLSDPCAPKPTEICVSVGHCFYDLVSSDNDSECANKDRRVLTLALLTKSKTGELRVIGPMAASSALVGDAGELEQLRRRVSAGMGLTDDGDISFAAADKVNEGLYGVRVMGSGDSYTFFNVTVATETAGDDRDLATVRHVDIAHNIVPSEDRDHVFVSMPRMHVAWPHGTTVLHPKMIIAAASWRPEYNFTYEWYAVPYDGYCATMRLFEACLYHPSAPACLDPAGHRGCVVGTMTHDDLVGRVLMARCRGSDLRTCEPHVIHIKQKPMVSLGRAVPELRVESAAHIPSLYILVVKIDDSVAGWAYTELMAEGSSPRVVIDIHMPRPTSAQGGIAALREIENDDSAPSLGSNEGGGPGNSKRRAAVLGAAVWIALTLLILGGLGAYVAVNKKCLRDKRQWLRGSRKPTLETHAHTYTSLPVGGDLSLEQDAEDEDEDEEELLYERERRRSSSGSKKSSRSPSRRSSRRNSFGPTLSANALSRFDKTVKLAMAEVAGRLLANKTFPSQRY</sequence>
<proteinExistence type="inferred from homology"/>